<accession>Q4KLL5</accession>
<dbReference type="EMBL" id="BC099132">
    <property type="protein sequence ID" value="AAH99132.1"/>
    <property type="molecule type" value="mRNA"/>
</dbReference>
<dbReference type="RefSeq" id="NP_001020799.1">
    <property type="nucleotide sequence ID" value="NM_001025628.1"/>
</dbReference>
<dbReference type="RefSeq" id="XP_006248493.1">
    <property type="nucleotide sequence ID" value="XM_006248431.5"/>
</dbReference>
<dbReference type="SMR" id="Q4KLL5"/>
<dbReference type="FunCoup" id="Q4KLL5">
    <property type="interactions" value="7"/>
</dbReference>
<dbReference type="STRING" id="10116.ENSRNOP00000002975"/>
<dbReference type="iPTMnet" id="Q4KLL5"/>
<dbReference type="PhosphoSitePlus" id="Q4KLL5"/>
<dbReference type="PaxDb" id="10116-ENSRNOP00000002975"/>
<dbReference type="Ensembl" id="ENSRNOT00000002975.6">
    <property type="protein sequence ID" value="ENSRNOP00000002975.3"/>
    <property type="gene ID" value="ENSRNOG00000002187.7"/>
</dbReference>
<dbReference type="GeneID" id="288053"/>
<dbReference type="KEGG" id="rno:288053"/>
<dbReference type="UCSC" id="RGD:1310675">
    <property type="organism name" value="rat"/>
</dbReference>
<dbReference type="AGR" id="RGD:1310675"/>
<dbReference type="CTD" id="54763"/>
<dbReference type="RGD" id="1310675">
    <property type="gene designation" value="Ropn1"/>
</dbReference>
<dbReference type="eggNOG" id="ENOG502R2JI">
    <property type="taxonomic scope" value="Eukaryota"/>
</dbReference>
<dbReference type="GeneTree" id="ENSGT00390000012731"/>
<dbReference type="HOGENOM" id="CLU_069829_1_0_1"/>
<dbReference type="InParanoid" id="Q4KLL5"/>
<dbReference type="OMA" id="QWASDYF"/>
<dbReference type="OrthoDB" id="10067602at2759"/>
<dbReference type="PhylomeDB" id="Q4KLL5"/>
<dbReference type="TreeFam" id="TF105421"/>
<dbReference type="PRO" id="PR:Q4KLL5"/>
<dbReference type="Proteomes" id="UP000002494">
    <property type="component" value="Chromosome 11"/>
</dbReference>
<dbReference type="Bgee" id="ENSRNOG00000002187">
    <property type="expression patterns" value="Expressed in testis and 3 other cell types or tissues"/>
</dbReference>
<dbReference type="GO" id="GO:0005737">
    <property type="term" value="C:cytoplasm"/>
    <property type="evidence" value="ECO:0000266"/>
    <property type="project" value="RGD"/>
</dbReference>
<dbReference type="GO" id="GO:0031514">
    <property type="term" value="C:motile cilium"/>
    <property type="evidence" value="ECO:0000318"/>
    <property type="project" value="GO_Central"/>
</dbReference>
<dbReference type="GO" id="GO:0097598">
    <property type="term" value="C:sperm cytoplasmic droplet"/>
    <property type="evidence" value="ECO:0000266"/>
    <property type="project" value="RGD"/>
</dbReference>
<dbReference type="GO" id="GO:0097228">
    <property type="term" value="C:sperm principal piece"/>
    <property type="evidence" value="ECO:0000266"/>
    <property type="project" value="RGD"/>
</dbReference>
<dbReference type="GO" id="GO:0042802">
    <property type="term" value="F:identical protein binding"/>
    <property type="evidence" value="ECO:0000266"/>
    <property type="project" value="RGD"/>
</dbReference>
<dbReference type="GO" id="GO:0044782">
    <property type="term" value="P:cilium organization"/>
    <property type="evidence" value="ECO:0000250"/>
    <property type="project" value="UniProtKB"/>
</dbReference>
<dbReference type="GO" id="GO:0030317">
    <property type="term" value="P:flagellated sperm motility"/>
    <property type="evidence" value="ECO:0000250"/>
    <property type="project" value="UniProtKB"/>
</dbReference>
<dbReference type="GO" id="GO:0061512">
    <property type="term" value="P:protein localization to cilium"/>
    <property type="evidence" value="ECO:0000250"/>
    <property type="project" value="UniProtKB"/>
</dbReference>
<dbReference type="GO" id="GO:0001932">
    <property type="term" value="P:regulation of protein phosphorylation"/>
    <property type="evidence" value="ECO:0000250"/>
    <property type="project" value="UniProtKB"/>
</dbReference>
<dbReference type="GO" id="GO:0048240">
    <property type="term" value="P:sperm capacitation"/>
    <property type="evidence" value="ECO:0000250"/>
    <property type="project" value="UniProtKB"/>
</dbReference>
<dbReference type="CDD" id="cd23019">
    <property type="entry name" value="DD_ROP"/>
    <property type="match status" value="1"/>
</dbReference>
<dbReference type="FunFam" id="1.20.890.10:FF:000004">
    <property type="entry name" value="ropporin-1-like protein isoform X2"/>
    <property type="match status" value="1"/>
</dbReference>
<dbReference type="Gene3D" id="1.20.890.10">
    <property type="entry name" value="cAMP-dependent protein kinase regulatory subunit, dimerization-anchoring domain"/>
    <property type="match status" value="1"/>
</dbReference>
<dbReference type="InterPro" id="IPR047844">
    <property type="entry name" value="ROP_DD"/>
</dbReference>
<dbReference type="PANTHER" id="PTHR14952">
    <property type="entry name" value="ROPPORIN-1-LIKE PROTEIN"/>
    <property type="match status" value="1"/>
</dbReference>
<dbReference type="PANTHER" id="PTHR14952:SF12">
    <property type="entry name" value="ROPPORIN-1B"/>
    <property type="match status" value="1"/>
</dbReference>
<dbReference type="SUPFAM" id="SSF47391">
    <property type="entry name" value="Dimerization-anchoring domain of cAMP-dependent PK regulatory subunit"/>
    <property type="match status" value="1"/>
</dbReference>
<organism>
    <name type="scientific">Rattus norvegicus</name>
    <name type="common">Rat</name>
    <dbReference type="NCBI Taxonomy" id="10116"/>
    <lineage>
        <taxon>Eukaryota</taxon>
        <taxon>Metazoa</taxon>
        <taxon>Chordata</taxon>
        <taxon>Craniata</taxon>
        <taxon>Vertebrata</taxon>
        <taxon>Euteleostomi</taxon>
        <taxon>Mammalia</taxon>
        <taxon>Eutheria</taxon>
        <taxon>Euarchontoglires</taxon>
        <taxon>Glires</taxon>
        <taxon>Rodentia</taxon>
        <taxon>Myomorpha</taxon>
        <taxon>Muroidea</taxon>
        <taxon>Muridae</taxon>
        <taxon>Murinae</taxon>
        <taxon>Rattus</taxon>
    </lineage>
</organism>
<proteinExistence type="evidence at protein level"/>
<protein>
    <recommendedName>
        <fullName>Ropporin-1</fullName>
    </recommendedName>
    <alternativeName>
        <fullName>Rhophilin-associated protein 1</fullName>
    </alternativeName>
</protein>
<reference key="1">
    <citation type="journal article" date="2004" name="Genome Res.">
        <title>The status, quality, and expansion of the NIH full-length cDNA project: the Mammalian Gene Collection (MGC).</title>
        <authorList>
            <consortium name="The MGC Project Team"/>
        </authorList>
    </citation>
    <scope>NUCLEOTIDE SEQUENCE [LARGE SCALE MRNA]</scope>
    <source>
        <tissue>Testis</tissue>
    </source>
</reference>
<reference key="2">
    <citation type="journal article" date="2012" name="Nat. Commun.">
        <title>Quantitative maps of protein phosphorylation sites across 14 different rat organs and tissues.</title>
        <authorList>
            <person name="Lundby A."/>
            <person name="Secher A."/>
            <person name="Lage K."/>
            <person name="Nordsborg N.B."/>
            <person name="Dmytriyev A."/>
            <person name="Lundby C."/>
            <person name="Olsen J.V."/>
        </authorList>
    </citation>
    <scope>PHOSPHORYLATION [LARGE SCALE ANALYSIS] AT SER-56</scope>
    <scope>IDENTIFICATION BY MASS SPECTROMETRY [LARGE SCALE ANALYSIS]</scope>
</reference>
<keyword id="KW-0966">Cell projection</keyword>
<keyword id="KW-0969">Cilium</keyword>
<keyword id="KW-0282">Flagellum</keyword>
<keyword id="KW-0597">Phosphoprotein</keyword>
<keyword id="KW-1185">Reference proteome</keyword>
<keyword id="KW-0832">Ubl conjugation</keyword>
<comment type="function">
    <text evidence="4">Important for male fertility. With ROPN1L, involved in fibrous sheath integrity and sperm motility, plays a role in PKA-dependent signaling processes required for spermatozoa capacitation.</text>
</comment>
<comment type="subunit">
    <text evidence="2 3 4">Homodimer. Interacts with AKAP3 (By similarity). May interact with SPA17 (By similarity). Interacts with RHPN1 (By similarity). Interacts with FSCB; the interaction increases upon spermatozoa capacitation conditions (By similarity). Interacts with CFAP61 (By similarity).</text>
</comment>
<comment type="subcellular location">
    <subcellularLocation>
        <location evidence="4">Cell projection</location>
        <location evidence="4">Cilium</location>
        <location evidence="4">Flagellum</location>
    </subcellularLocation>
    <text evidence="4">In the sperm tail, found in the principal piece and in the cytoplasmic droplet located at the distal end of the midpiece. Inner surface of the fibrous sheath.</text>
</comment>
<comment type="domain">
    <text evidence="1">The RIIa domain mediates interaction with AKAP3.</text>
</comment>
<comment type="PTM">
    <text evidence="4">Sumoylated, sumoylation decreases upon spermatozoa capacitation conditions.</text>
</comment>
<comment type="miscellaneous">
    <text>'Ropporin' comes from the Japanese word 'oppo' which means 'tail'.</text>
</comment>
<comment type="similarity">
    <text evidence="5">Belongs to the ropporin family.</text>
</comment>
<sequence length="212" mass="23961">MPQTDKQVCIPPELPELLKQFTKAAIRTQPPDLIQWAAEYFGAMSRGEIPPVRERSEQVPLSNWAELTPELLKVLHSRVGGRLIIHADELAQMWKVLNLPTDLFNSVMNVGRFTEEIEWLKFLALACSSLGVTIAKTLKIVCEVLSCDHDGGPPRIPFSTFQFLYTYIAEVDGEISSSHVTRMLNYIEQEVIGPDGLIKVNDFTQNPRVRLE</sequence>
<gene>
    <name type="primary">Ropn1</name>
</gene>
<name>ROP1_RAT</name>
<feature type="chain" id="PRO_0000307396" description="Ropporin-1">
    <location>
        <begin position="1"/>
        <end position="212"/>
    </location>
</feature>
<feature type="domain" description="RIIa">
    <location>
        <begin position="12"/>
        <end position="43"/>
    </location>
</feature>
<feature type="region of interest" description="Interaction with RHPN1" evidence="1">
    <location>
        <begin position="209"/>
        <end position="212"/>
    </location>
</feature>
<feature type="modified residue" description="Phosphoserine" evidence="6">
    <location>
        <position position="56"/>
    </location>
</feature>
<evidence type="ECO:0000250" key="1"/>
<evidence type="ECO:0000250" key="2">
    <source>
        <dbReference type="UniProtKB" id="Q96C74"/>
    </source>
</evidence>
<evidence type="ECO:0000250" key="3">
    <source>
        <dbReference type="UniProtKB" id="Q9BZX4"/>
    </source>
</evidence>
<evidence type="ECO:0000250" key="4">
    <source>
        <dbReference type="UniProtKB" id="Q9ESG2"/>
    </source>
</evidence>
<evidence type="ECO:0000305" key="5"/>
<evidence type="ECO:0007744" key="6">
    <source>
    </source>
</evidence>